<feature type="chain" id="PRO_0000107727" description="Nucleotide-binding protein MS1718">
    <location>
        <begin position="1"/>
        <end position="289"/>
    </location>
</feature>
<feature type="binding site" evidence="1">
    <location>
        <begin position="8"/>
        <end position="15"/>
    </location>
    <ligand>
        <name>ATP</name>
        <dbReference type="ChEBI" id="CHEBI:30616"/>
    </ligand>
</feature>
<feature type="binding site" evidence="1">
    <location>
        <begin position="56"/>
        <end position="59"/>
    </location>
    <ligand>
        <name>GTP</name>
        <dbReference type="ChEBI" id="CHEBI:37565"/>
    </ligand>
</feature>
<sequence>MELIIISGRSGAGKSVALRALEDMGYYCVDNLPINLLPELADILSTSQQSAAVSLDIRNLPHSPETLDTLLQQLADAQHQVRIIFLEADRSTLIRRYSDSRRLHPLSMQDLSLEAAIEAEAGYLEPLLQNAELVINTSEISTHELAQRLREFLKGKPDKELKIVVESFGFKYGLPLDADYVFDVRFLPNPHWNPDLRPMTGLDQPVIDFLGKYSEVNNFIYSTRNYLETWLPMLEQNNRSYLTIAIGCTGGKHRSVYIAQQLGEYFQAKGKKVKIQHKSLEKHHKKNSA</sequence>
<organism>
    <name type="scientific">Mannheimia succiniciproducens (strain KCTC 0769BP / MBEL55E)</name>
    <dbReference type="NCBI Taxonomy" id="221988"/>
    <lineage>
        <taxon>Bacteria</taxon>
        <taxon>Pseudomonadati</taxon>
        <taxon>Pseudomonadota</taxon>
        <taxon>Gammaproteobacteria</taxon>
        <taxon>Pasteurellales</taxon>
        <taxon>Pasteurellaceae</taxon>
        <taxon>Basfia</taxon>
    </lineage>
</organism>
<proteinExistence type="inferred from homology"/>
<keyword id="KW-0067">ATP-binding</keyword>
<keyword id="KW-0342">GTP-binding</keyword>
<keyword id="KW-0547">Nucleotide-binding</keyword>
<reference key="1">
    <citation type="journal article" date="2004" name="Nat. Biotechnol.">
        <title>The genome sequence of the capnophilic rumen bacterium Mannheimia succiniciproducens.</title>
        <authorList>
            <person name="Hong S.H."/>
            <person name="Kim J.S."/>
            <person name="Lee S.Y."/>
            <person name="In Y.H."/>
            <person name="Choi S.S."/>
            <person name="Rih J.-K."/>
            <person name="Kim C.H."/>
            <person name="Jeong H."/>
            <person name="Hur C.G."/>
            <person name="Kim J.J."/>
        </authorList>
    </citation>
    <scope>NUCLEOTIDE SEQUENCE [LARGE SCALE GENOMIC DNA]</scope>
    <source>
        <strain>KCTC 0769BP / MBEL55E</strain>
    </source>
</reference>
<comment type="function">
    <text evidence="1">Displays ATPase and GTPase activities.</text>
</comment>
<comment type="similarity">
    <text evidence="1">Belongs to the RapZ-like family.</text>
</comment>
<comment type="sequence caution" evidence="2">
    <conflict type="erroneous initiation">
        <sequence resource="EMBL-CDS" id="AAU38325"/>
    </conflict>
</comment>
<name>Y1718_MANSM</name>
<protein>
    <recommendedName>
        <fullName evidence="1">Nucleotide-binding protein MS1718</fullName>
    </recommendedName>
</protein>
<evidence type="ECO:0000255" key="1">
    <source>
        <dbReference type="HAMAP-Rule" id="MF_00636"/>
    </source>
</evidence>
<evidence type="ECO:0000305" key="2"/>
<dbReference type="EMBL" id="AE016827">
    <property type="protein sequence ID" value="AAU38325.1"/>
    <property type="status" value="ALT_INIT"/>
    <property type="molecule type" value="Genomic_DNA"/>
</dbReference>
<dbReference type="RefSeq" id="WP_041639924.1">
    <property type="nucleotide sequence ID" value="NC_006300.1"/>
</dbReference>
<dbReference type="SMR" id="Q65RT5"/>
<dbReference type="STRING" id="221988.MS1718"/>
<dbReference type="KEGG" id="msu:MS1718"/>
<dbReference type="eggNOG" id="COG1660">
    <property type="taxonomic scope" value="Bacteria"/>
</dbReference>
<dbReference type="HOGENOM" id="CLU_059558_1_1_6"/>
<dbReference type="OrthoDB" id="9784461at2"/>
<dbReference type="Proteomes" id="UP000000607">
    <property type="component" value="Chromosome"/>
</dbReference>
<dbReference type="GO" id="GO:0005524">
    <property type="term" value="F:ATP binding"/>
    <property type="evidence" value="ECO:0007669"/>
    <property type="project" value="UniProtKB-UniRule"/>
</dbReference>
<dbReference type="GO" id="GO:0005525">
    <property type="term" value="F:GTP binding"/>
    <property type="evidence" value="ECO:0007669"/>
    <property type="project" value="UniProtKB-UniRule"/>
</dbReference>
<dbReference type="Gene3D" id="3.40.50.300">
    <property type="entry name" value="P-loop containing nucleotide triphosphate hydrolases"/>
    <property type="match status" value="1"/>
</dbReference>
<dbReference type="HAMAP" id="MF_00636">
    <property type="entry name" value="RapZ_like"/>
    <property type="match status" value="1"/>
</dbReference>
<dbReference type="InterPro" id="IPR027417">
    <property type="entry name" value="P-loop_NTPase"/>
</dbReference>
<dbReference type="InterPro" id="IPR005337">
    <property type="entry name" value="RapZ-like"/>
</dbReference>
<dbReference type="InterPro" id="IPR053930">
    <property type="entry name" value="RapZ-like_N"/>
</dbReference>
<dbReference type="InterPro" id="IPR053931">
    <property type="entry name" value="RapZ_C"/>
</dbReference>
<dbReference type="NCBIfam" id="NF003828">
    <property type="entry name" value="PRK05416.1"/>
    <property type="match status" value="1"/>
</dbReference>
<dbReference type="PANTHER" id="PTHR30448">
    <property type="entry name" value="RNASE ADAPTER PROTEIN RAPZ"/>
    <property type="match status" value="1"/>
</dbReference>
<dbReference type="PANTHER" id="PTHR30448:SF0">
    <property type="entry name" value="RNASE ADAPTER PROTEIN RAPZ"/>
    <property type="match status" value="1"/>
</dbReference>
<dbReference type="Pfam" id="PF22740">
    <property type="entry name" value="PapZ_C"/>
    <property type="match status" value="1"/>
</dbReference>
<dbReference type="Pfam" id="PF03668">
    <property type="entry name" value="RapZ-like_N"/>
    <property type="match status" value="1"/>
</dbReference>
<dbReference type="PIRSF" id="PIRSF005052">
    <property type="entry name" value="P-loopkin"/>
    <property type="match status" value="1"/>
</dbReference>
<dbReference type="SUPFAM" id="SSF52540">
    <property type="entry name" value="P-loop containing nucleoside triphosphate hydrolases"/>
    <property type="match status" value="1"/>
</dbReference>
<gene>
    <name type="ordered locus">MS1718</name>
</gene>
<accession>Q65RT5</accession>